<name>ASUE3_STRNS</name>
<gene>
    <name evidence="3" type="primary">asuE3</name>
</gene>
<sequence length="371" mass="40991">MERISFGAFLSPLHPLGEDPGLSLWRDLELAEWLDQFGYEELWVGEHHSAGWGTISSPELFIATAAERTRRIRLGTGVVSLPYHHPFMVASRAVQLDHLTGGRFTLGVGAGSIPSDMHFLGIDPADTRRRTAESLDVIHRLLTGDEPVTRVTDWFELHDARLQLRPRRASGLPLAVSSAVSPFGMRLAGQYGAAPLSFGVPPRPGSSVDDLAAQWQHAVDSAAEHGRTIDRADWRVALSVHVADSREQALDDLVDGWMRYRNEYWALLGTPPVHSRTEARKALAELIDRRSTIVGSVDECIDAVRDVQEATGGFGRLLVNVLDWADREAMKRSFELFARFVAPRFNGSLDGVTASYGWVAEQARAQRAAAR</sequence>
<reference key="1">
    <citation type="journal article" date="2010" name="J. Biol. Chem.">
        <title>Biochemical and genetic insights into asukamycin biosynthesis.</title>
        <authorList>
            <person name="Rui Z."/>
            <person name="Petrickova K."/>
            <person name="Skanta F."/>
            <person name="Pospisil S."/>
            <person name="Yang Y."/>
            <person name="Chen C.Y."/>
            <person name="Tsai S.F."/>
            <person name="Floss H.G."/>
            <person name="Petricek M."/>
            <person name="Yu T.W."/>
        </authorList>
    </citation>
    <scope>NUCLEOTIDE SEQUENCE [GENOMIC DNA]</scope>
    <scope>FUNCTION</scope>
    <scope>PATHWAY</scope>
    <scope>DISRUPTION PHENOTYPE</scope>
    <source>
        <strain>ATCC 29757 / FERM-P 3429 / AM-1042</strain>
    </source>
</reference>
<reference key="2">
    <citation type="journal article" date="2013" name="Chem. Biol.">
        <title>Tandem enzymatic oxygenations in biosynthesis of epoxyquinone pharmacophore of manumycin-type metabolites.</title>
        <authorList>
            <person name="Rui Z."/>
            <person name="Sandy M."/>
            <person name="Jung B."/>
            <person name="Zhang W."/>
        </authorList>
    </citation>
    <scope>FUNCTION</scope>
    <scope>CATALYTIC ACTIVITY</scope>
    <scope>COFACTOR</scope>
    <scope>BIOPHYSICOCHEMICAL PROPERTIES</scope>
    <source>
        <strain>ATCC 29757 / FERM-P 3429 / AM-1042</strain>
    </source>
</reference>
<protein>
    <recommendedName>
        <fullName evidence="5">4-hydroxyprotoasukamycin monooxygenase</fullName>
        <ecNumber evidence="2">1.14.13.-</ecNumber>
    </recommendedName>
    <alternativeName>
        <fullName evidence="4">Flavin-dependent 4-hydroxyprotoasukamycin epoxidase</fullName>
    </alternativeName>
</protein>
<keyword id="KW-0045">Antibiotic biosynthesis</keyword>
<keyword id="KW-0285">Flavoprotein</keyword>
<keyword id="KW-0288">FMN</keyword>
<keyword id="KW-0503">Monooxygenase</keyword>
<keyword id="KW-0520">NAD</keyword>
<keyword id="KW-0560">Oxidoreductase</keyword>
<comment type="function">
    <text evidence="1 2">Involved in the biosynthesis of the antibiotic asukamycin (PubMed:20522559, PubMed:23890006). Catalyzes the epoxidation of 4-hydroxyprotoasukamycin to the final product, asukamycin (PubMed:23890006). Can also convert some 4-hydroxyprotoasukamycin derivatives to their asukamycin derivatives, but cannot use protoasukamycin as substrate (PubMed:23890006). Can also use NADPH, but catalytic efficiency is 20-fold higher with NADH (PubMed:23890006).</text>
</comment>
<comment type="catalytic activity">
    <reaction evidence="2">
        <text>4-hydroxyprotoasukamycin + NADH + O2 + H(+) = asukamycin + NAD(+) + H2O</text>
        <dbReference type="Rhea" id="RHEA:75139"/>
        <dbReference type="ChEBI" id="CHEBI:15377"/>
        <dbReference type="ChEBI" id="CHEBI:15378"/>
        <dbReference type="ChEBI" id="CHEBI:15379"/>
        <dbReference type="ChEBI" id="CHEBI:57540"/>
        <dbReference type="ChEBI" id="CHEBI:57945"/>
        <dbReference type="ChEBI" id="CHEBI:73481"/>
        <dbReference type="ChEBI" id="CHEBI:90902"/>
    </reaction>
    <physiologicalReaction direction="left-to-right" evidence="2">
        <dbReference type="Rhea" id="RHEA:75140"/>
    </physiologicalReaction>
</comment>
<comment type="cofactor">
    <cofactor evidence="2">
        <name>FMN</name>
        <dbReference type="ChEBI" id="CHEBI:58210"/>
    </cofactor>
    <text evidence="2">Shows a preference for FMN. Activity with FAD or riboflavin is 3-fold lower.</text>
</comment>
<comment type="biophysicochemical properties">
    <kinetics>
        <KM evidence="2">7.2 uM for 4-hydroxyprotoasukamycin</KM>
        <KM evidence="2">17.32 uM for NADH</KM>
        <KM evidence="2">2285 uM for NADPH</KM>
        <text evidence="2">kcat is 0.549 min(-1) with 4-hydroxyprotoasukamycin as substrate. kcat is 0.075 sec(-1) with NADH as substrate. kcat is 0.538 sec(-1) with NADPH as substrate.</text>
    </kinetics>
</comment>
<comment type="pathway">
    <text evidence="1">Antibiotic biosynthesis.</text>
</comment>
<comment type="disruption phenotype">
    <text evidence="1">Mutant accumulates 4-hydroxyprotoasukamycin.</text>
</comment>
<comment type="similarity">
    <text evidence="5">Belongs to the bacterial luciferase oxidoreductase family.</text>
</comment>
<accession>D7P5X0</accession>
<feature type="chain" id="PRO_0000457817" description="4-hydroxyprotoasukamycin monooxygenase">
    <location>
        <begin position="1"/>
        <end position="371"/>
    </location>
</feature>
<proteinExistence type="evidence at protein level"/>
<evidence type="ECO:0000269" key="1">
    <source>
    </source>
</evidence>
<evidence type="ECO:0000269" key="2">
    <source>
    </source>
</evidence>
<evidence type="ECO:0000303" key="3">
    <source>
    </source>
</evidence>
<evidence type="ECO:0000303" key="4">
    <source>
    </source>
</evidence>
<evidence type="ECO:0000305" key="5"/>
<dbReference type="EC" id="1.14.13.-" evidence="2"/>
<dbReference type="EMBL" id="GQ926890">
    <property type="protein sequence ID" value="ADI58648.1"/>
    <property type="molecule type" value="Genomic_DNA"/>
</dbReference>
<dbReference type="SMR" id="D7P5X0"/>
<dbReference type="BioCyc" id="MetaCyc:MONOMER-19678"/>
<dbReference type="GO" id="GO:0005829">
    <property type="term" value="C:cytosol"/>
    <property type="evidence" value="ECO:0007669"/>
    <property type="project" value="TreeGrafter"/>
</dbReference>
<dbReference type="GO" id="GO:0004497">
    <property type="term" value="F:monooxygenase activity"/>
    <property type="evidence" value="ECO:0007669"/>
    <property type="project" value="UniProtKB-KW"/>
</dbReference>
<dbReference type="GO" id="GO:0016705">
    <property type="term" value="F:oxidoreductase activity, acting on paired donors, with incorporation or reduction of molecular oxygen"/>
    <property type="evidence" value="ECO:0007669"/>
    <property type="project" value="InterPro"/>
</dbReference>
<dbReference type="GO" id="GO:0017000">
    <property type="term" value="P:antibiotic biosynthetic process"/>
    <property type="evidence" value="ECO:0007669"/>
    <property type="project" value="UniProtKB-KW"/>
</dbReference>
<dbReference type="Gene3D" id="3.20.20.30">
    <property type="entry name" value="Luciferase-like domain"/>
    <property type="match status" value="1"/>
</dbReference>
<dbReference type="InterPro" id="IPR050766">
    <property type="entry name" value="Bact_Lucif_Oxidored"/>
</dbReference>
<dbReference type="InterPro" id="IPR011251">
    <property type="entry name" value="Luciferase-like_dom"/>
</dbReference>
<dbReference type="InterPro" id="IPR036661">
    <property type="entry name" value="Luciferase-like_sf"/>
</dbReference>
<dbReference type="PANTHER" id="PTHR30137:SF16">
    <property type="entry name" value="BLL0895 PROTEIN"/>
    <property type="match status" value="1"/>
</dbReference>
<dbReference type="PANTHER" id="PTHR30137">
    <property type="entry name" value="LUCIFERASE-LIKE MONOOXYGENASE"/>
    <property type="match status" value="1"/>
</dbReference>
<dbReference type="Pfam" id="PF00296">
    <property type="entry name" value="Bac_luciferase"/>
    <property type="match status" value="1"/>
</dbReference>
<dbReference type="SUPFAM" id="SSF51679">
    <property type="entry name" value="Bacterial luciferase-like"/>
    <property type="match status" value="1"/>
</dbReference>
<organism>
    <name type="scientific">Streptomyces nodosus subsp. asukaensis</name>
    <dbReference type="NCBI Taxonomy" id="222892"/>
    <lineage>
        <taxon>Bacteria</taxon>
        <taxon>Bacillati</taxon>
        <taxon>Actinomycetota</taxon>
        <taxon>Actinomycetes</taxon>
        <taxon>Kitasatosporales</taxon>
        <taxon>Streptomycetaceae</taxon>
        <taxon>Streptomyces</taxon>
    </lineage>
</organism>